<reference key="1">
    <citation type="journal article" date="2002" name="Nature">
        <title>Comparison of the genomes of two Xanthomonas pathogens with differing host specificities.</title>
        <authorList>
            <person name="da Silva A.C.R."/>
            <person name="Ferro J.A."/>
            <person name="Reinach F.C."/>
            <person name="Farah C.S."/>
            <person name="Furlan L.R."/>
            <person name="Quaggio R.B."/>
            <person name="Monteiro-Vitorello C.B."/>
            <person name="Van Sluys M.A."/>
            <person name="Almeida N.F. Jr."/>
            <person name="Alves L.M.C."/>
            <person name="do Amaral A.M."/>
            <person name="Bertolini M.C."/>
            <person name="Camargo L.E.A."/>
            <person name="Camarotte G."/>
            <person name="Cannavan F."/>
            <person name="Cardozo J."/>
            <person name="Chambergo F."/>
            <person name="Ciapina L.P."/>
            <person name="Cicarelli R.M.B."/>
            <person name="Coutinho L.L."/>
            <person name="Cursino-Santos J.R."/>
            <person name="El-Dorry H."/>
            <person name="Faria J.B."/>
            <person name="Ferreira A.J.S."/>
            <person name="Ferreira R.C.C."/>
            <person name="Ferro M.I.T."/>
            <person name="Formighieri E.F."/>
            <person name="Franco M.C."/>
            <person name="Greggio C.C."/>
            <person name="Gruber A."/>
            <person name="Katsuyama A.M."/>
            <person name="Kishi L.T."/>
            <person name="Leite R.P."/>
            <person name="Lemos E.G.M."/>
            <person name="Lemos M.V.F."/>
            <person name="Locali E.C."/>
            <person name="Machado M.A."/>
            <person name="Madeira A.M.B.N."/>
            <person name="Martinez-Rossi N.M."/>
            <person name="Martins E.C."/>
            <person name="Meidanis J."/>
            <person name="Menck C.F.M."/>
            <person name="Miyaki C.Y."/>
            <person name="Moon D.H."/>
            <person name="Moreira L.M."/>
            <person name="Novo M.T.M."/>
            <person name="Okura V.K."/>
            <person name="Oliveira M.C."/>
            <person name="Oliveira V.R."/>
            <person name="Pereira H.A."/>
            <person name="Rossi A."/>
            <person name="Sena J.A.D."/>
            <person name="Silva C."/>
            <person name="de Souza R.F."/>
            <person name="Spinola L.A.F."/>
            <person name="Takita M.A."/>
            <person name="Tamura R.E."/>
            <person name="Teixeira E.C."/>
            <person name="Tezza R.I.D."/>
            <person name="Trindade dos Santos M."/>
            <person name="Truffi D."/>
            <person name="Tsai S.M."/>
            <person name="White F.F."/>
            <person name="Setubal J.C."/>
            <person name="Kitajima J.P."/>
        </authorList>
    </citation>
    <scope>NUCLEOTIDE SEQUENCE [LARGE SCALE GENOMIC DNA]</scope>
    <source>
        <strain>306</strain>
    </source>
</reference>
<keyword id="KW-0030">Aminoacyl-tRNA synthetase</keyword>
<keyword id="KW-0067">ATP-binding</keyword>
<keyword id="KW-0963">Cytoplasm</keyword>
<keyword id="KW-0436">Ligase</keyword>
<keyword id="KW-0479">Metal-binding</keyword>
<keyword id="KW-0547">Nucleotide-binding</keyword>
<keyword id="KW-0648">Protein biosynthesis</keyword>
<keyword id="KW-0862">Zinc</keyword>
<protein>
    <recommendedName>
        <fullName evidence="1">Cysteine--tRNA ligase</fullName>
        <ecNumber evidence="1">6.1.1.16</ecNumber>
    </recommendedName>
    <alternativeName>
        <fullName evidence="1">Cysteinyl-tRNA synthetase</fullName>
        <shortName evidence="1">CysRS</shortName>
    </alternativeName>
</protein>
<feature type="chain" id="PRO_0000159525" description="Cysteine--tRNA ligase">
    <location>
        <begin position="1"/>
        <end position="476"/>
    </location>
</feature>
<feature type="short sequence motif" description="'HIGH' region">
    <location>
        <begin position="33"/>
        <end position="43"/>
    </location>
</feature>
<feature type="short sequence motif" description="'KMSKS' region">
    <location>
        <begin position="269"/>
        <end position="273"/>
    </location>
</feature>
<feature type="binding site" evidence="1">
    <location>
        <position position="31"/>
    </location>
    <ligand>
        <name>Zn(2+)</name>
        <dbReference type="ChEBI" id="CHEBI:29105"/>
    </ligand>
</feature>
<feature type="binding site" evidence="1">
    <location>
        <position position="211"/>
    </location>
    <ligand>
        <name>Zn(2+)</name>
        <dbReference type="ChEBI" id="CHEBI:29105"/>
    </ligand>
</feature>
<feature type="binding site" evidence="1">
    <location>
        <position position="236"/>
    </location>
    <ligand>
        <name>Zn(2+)</name>
        <dbReference type="ChEBI" id="CHEBI:29105"/>
    </ligand>
</feature>
<feature type="binding site" evidence="1">
    <location>
        <position position="240"/>
    </location>
    <ligand>
        <name>Zn(2+)</name>
        <dbReference type="ChEBI" id="CHEBI:29105"/>
    </ligand>
</feature>
<feature type="binding site" evidence="1">
    <location>
        <position position="272"/>
    </location>
    <ligand>
        <name>ATP</name>
        <dbReference type="ChEBI" id="CHEBI:30616"/>
    </ligand>
</feature>
<organism>
    <name type="scientific">Xanthomonas axonopodis pv. citri (strain 306)</name>
    <dbReference type="NCBI Taxonomy" id="190486"/>
    <lineage>
        <taxon>Bacteria</taxon>
        <taxon>Pseudomonadati</taxon>
        <taxon>Pseudomonadota</taxon>
        <taxon>Gammaproteobacteria</taxon>
        <taxon>Lysobacterales</taxon>
        <taxon>Lysobacteraceae</taxon>
        <taxon>Xanthomonas</taxon>
    </lineage>
</organism>
<name>SYC_XANAC</name>
<sequence length="476" mass="51740">MPMSLRLHNNLTRRVEPFAPLDPSSPTLYVCGPTVYNYAHIGNARGPVVFDVLAALLRRRYGALRYARNITDVDDKINAAAQAQGVPISTITDRFAAIYRQDMAALGVVPPDIEPEATAHIPQIVAMIEQLIANGHAYAAEGHVLFSVSSFDGYGKLSRRDPDEMLAGARVDVAPYKRDPGDFVLWKPSSADLPGWESPWGRGRPGWHIECSAMAAAHLGPTIDIHAGGVDLQFPHHENEIAQSECAHGGATFARFWLHNGMLNFSGAKMSKSLGNIETVHELIARHPPEALRYALLSAHYRQPLDWSDGLIEQAKNTLDRLYGTLRDLAALQADSGNDVAPSRTIPVEVESALEDDLNTPLALSVIASIASEARALRNELVHGGEPSTRMSDLHAVHAKLLGAGLALGLLQQDPAAWFSRGTDAGDDARITALVEERSTAKKAKDFARADAIRKQLAEEGIVLEDTPQGVRWKRA</sequence>
<evidence type="ECO:0000255" key="1">
    <source>
        <dbReference type="HAMAP-Rule" id="MF_00041"/>
    </source>
</evidence>
<proteinExistence type="inferred from homology"/>
<accession>Q8PK23</accession>
<comment type="catalytic activity">
    <reaction evidence="1">
        <text>tRNA(Cys) + L-cysteine + ATP = L-cysteinyl-tRNA(Cys) + AMP + diphosphate</text>
        <dbReference type="Rhea" id="RHEA:17773"/>
        <dbReference type="Rhea" id="RHEA-COMP:9661"/>
        <dbReference type="Rhea" id="RHEA-COMP:9679"/>
        <dbReference type="ChEBI" id="CHEBI:30616"/>
        <dbReference type="ChEBI" id="CHEBI:33019"/>
        <dbReference type="ChEBI" id="CHEBI:35235"/>
        <dbReference type="ChEBI" id="CHEBI:78442"/>
        <dbReference type="ChEBI" id="CHEBI:78517"/>
        <dbReference type="ChEBI" id="CHEBI:456215"/>
        <dbReference type="EC" id="6.1.1.16"/>
    </reaction>
</comment>
<comment type="cofactor">
    <cofactor evidence="1">
        <name>Zn(2+)</name>
        <dbReference type="ChEBI" id="CHEBI:29105"/>
    </cofactor>
    <text evidence="1">Binds 1 zinc ion per subunit.</text>
</comment>
<comment type="subunit">
    <text evidence="1">Monomer.</text>
</comment>
<comment type="subcellular location">
    <subcellularLocation>
        <location evidence="1">Cytoplasm</location>
    </subcellularLocation>
</comment>
<comment type="similarity">
    <text evidence="1">Belongs to the class-I aminoacyl-tRNA synthetase family.</text>
</comment>
<dbReference type="EC" id="6.1.1.16" evidence="1"/>
<dbReference type="EMBL" id="AE008923">
    <property type="protein sequence ID" value="AAM37206.1"/>
    <property type="molecule type" value="Genomic_DNA"/>
</dbReference>
<dbReference type="SMR" id="Q8PK23"/>
<dbReference type="KEGG" id="xac:XAC2354"/>
<dbReference type="eggNOG" id="COG0215">
    <property type="taxonomic scope" value="Bacteria"/>
</dbReference>
<dbReference type="HOGENOM" id="CLU_013528_0_1_6"/>
<dbReference type="Proteomes" id="UP000000576">
    <property type="component" value="Chromosome"/>
</dbReference>
<dbReference type="GO" id="GO:0005829">
    <property type="term" value="C:cytosol"/>
    <property type="evidence" value="ECO:0007669"/>
    <property type="project" value="TreeGrafter"/>
</dbReference>
<dbReference type="GO" id="GO:0005524">
    <property type="term" value="F:ATP binding"/>
    <property type="evidence" value="ECO:0007669"/>
    <property type="project" value="UniProtKB-UniRule"/>
</dbReference>
<dbReference type="GO" id="GO:0004817">
    <property type="term" value="F:cysteine-tRNA ligase activity"/>
    <property type="evidence" value="ECO:0007669"/>
    <property type="project" value="UniProtKB-UniRule"/>
</dbReference>
<dbReference type="GO" id="GO:0008270">
    <property type="term" value="F:zinc ion binding"/>
    <property type="evidence" value="ECO:0007669"/>
    <property type="project" value="UniProtKB-UniRule"/>
</dbReference>
<dbReference type="GO" id="GO:0006423">
    <property type="term" value="P:cysteinyl-tRNA aminoacylation"/>
    <property type="evidence" value="ECO:0007669"/>
    <property type="project" value="UniProtKB-UniRule"/>
</dbReference>
<dbReference type="CDD" id="cd00672">
    <property type="entry name" value="CysRS_core"/>
    <property type="match status" value="1"/>
</dbReference>
<dbReference type="FunFam" id="3.40.50.620:FF:000068">
    <property type="entry name" value="Cysteine--tRNA ligase"/>
    <property type="match status" value="1"/>
</dbReference>
<dbReference type="Gene3D" id="1.20.120.1910">
    <property type="entry name" value="Cysteine-tRNA ligase, C-terminal anti-codon recognition domain"/>
    <property type="match status" value="1"/>
</dbReference>
<dbReference type="Gene3D" id="3.40.50.620">
    <property type="entry name" value="HUPs"/>
    <property type="match status" value="1"/>
</dbReference>
<dbReference type="HAMAP" id="MF_00041">
    <property type="entry name" value="Cys_tRNA_synth"/>
    <property type="match status" value="1"/>
</dbReference>
<dbReference type="InterPro" id="IPR015803">
    <property type="entry name" value="Cys-tRNA-ligase"/>
</dbReference>
<dbReference type="InterPro" id="IPR015273">
    <property type="entry name" value="Cys-tRNA-synt_Ia_DALR"/>
</dbReference>
<dbReference type="InterPro" id="IPR024909">
    <property type="entry name" value="Cys-tRNA/MSH_ligase"/>
</dbReference>
<dbReference type="InterPro" id="IPR056411">
    <property type="entry name" value="CysS_C"/>
</dbReference>
<dbReference type="InterPro" id="IPR014729">
    <property type="entry name" value="Rossmann-like_a/b/a_fold"/>
</dbReference>
<dbReference type="InterPro" id="IPR032678">
    <property type="entry name" value="tRNA-synt_1_cat_dom"/>
</dbReference>
<dbReference type="InterPro" id="IPR009080">
    <property type="entry name" value="tRNAsynth_Ia_anticodon-bd"/>
</dbReference>
<dbReference type="NCBIfam" id="TIGR00435">
    <property type="entry name" value="cysS"/>
    <property type="match status" value="1"/>
</dbReference>
<dbReference type="PANTHER" id="PTHR10890:SF3">
    <property type="entry name" value="CYSTEINE--TRNA LIGASE, CYTOPLASMIC"/>
    <property type="match status" value="1"/>
</dbReference>
<dbReference type="PANTHER" id="PTHR10890">
    <property type="entry name" value="CYSTEINYL-TRNA SYNTHETASE"/>
    <property type="match status" value="1"/>
</dbReference>
<dbReference type="Pfam" id="PF23493">
    <property type="entry name" value="CysS_C"/>
    <property type="match status" value="1"/>
</dbReference>
<dbReference type="Pfam" id="PF09190">
    <property type="entry name" value="DALR_2"/>
    <property type="match status" value="1"/>
</dbReference>
<dbReference type="Pfam" id="PF01406">
    <property type="entry name" value="tRNA-synt_1e"/>
    <property type="match status" value="1"/>
</dbReference>
<dbReference type="PRINTS" id="PR00983">
    <property type="entry name" value="TRNASYNTHCYS"/>
</dbReference>
<dbReference type="SMART" id="SM00840">
    <property type="entry name" value="DALR_2"/>
    <property type="match status" value="1"/>
</dbReference>
<dbReference type="SUPFAM" id="SSF47323">
    <property type="entry name" value="Anticodon-binding domain of a subclass of class I aminoacyl-tRNA synthetases"/>
    <property type="match status" value="1"/>
</dbReference>
<dbReference type="SUPFAM" id="SSF52374">
    <property type="entry name" value="Nucleotidylyl transferase"/>
    <property type="match status" value="1"/>
</dbReference>
<gene>
    <name evidence="1" type="primary">cysS</name>
    <name type="ordered locus">XAC2354</name>
</gene>